<keyword id="KW-1003">Cell membrane</keyword>
<keyword id="KW-0472">Membrane</keyword>
<keyword id="KW-0812">Transmembrane</keyword>
<keyword id="KW-1133">Transmembrane helix</keyword>
<reference key="1">
    <citation type="journal article" date="2011" name="J. Bacteriol.">
        <title>Genome sequence of lineage III Listeria monocytogenes strain HCC23.</title>
        <authorList>
            <person name="Steele C.L."/>
            <person name="Donaldson J.R."/>
            <person name="Paul D."/>
            <person name="Banes M.M."/>
            <person name="Arick T."/>
            <person name="Bridges S.M."/>
            <person name="Lawrence M.L."/>
        </authorList>
    </citation>
    <scope>NUCLEOTIDE SEQUENCE [LARGE SCALE GENOMIC DNA]</scope>
    <source>
        <strain>HCC23</strain>
    </source>
</reference>
<dbReference type="EMBL" id="CP001175">
    <property type="protein sequence ID" value="ACK40197.1"/>
    <property type="molecule type" value="Genomic_DNA"/>
</dbReference>
<dbReference type="RefSeq" id="WP_003721896.1">
    <property type="nucleotide sequence ID" value="NC_011660.1"/>
</dbReference>
<dbReference type="KEGG" id="lmh:LMHCC_1856"/>
<dbReference type="HOGENOM" id="CLU_133645_0_0_9"/>
<dbReference type="GO" id="GO:0005886">
    <property type="term" value="C:plasma membrane"/>
    <property type="evidence" value="ECO:0007669"/>
    <property type="project" value="UniProtKB-SubCell"/>
</dbReference>
<dbReference type="HAMAP" id="MF_01071">
    <property type="entry name" value="UPF0266"/>
    <property type="match status" value="1"/>
</dbReference>
<dbReference type="InterPro" id="IPR009328">
    <property type="entry name" value="DUF986"/>
</dbReference>
<dbReference type="NCBIfam" id="NF002791">
    <property type="entry name" value="PRK02913.1"/>
    <property type="match status" value="1"/>
</dbReference>
<dbReference type="Pfam" id="PF06173">
    <property type="entry name" value="DUF986"/>
    <property type="match status" value="1"/>
</dbReference>
<dbReference type="PIRSF" id="PIRSF020687">
    <property type="entry name" value="UCP020687"/>
    <property type="match status" value="1"/>
</dbReference>
<evidence type="ECO:0000255" key="1">
    <source>
        <dbReference type="HAMAP-Rule" id="MF_01071"/>
    </source>
</evidence>
<gene>
    <name type="ordered locus">LMHCC_1856</name>
</gene>
<protein>
    <recommendedName>
        <fullName evidence="1">UPF0266 membrane protein LMHCC_1856</fullName>
    </recommendedName>
</protein>
<organism>
    <name type="scientific">Listeria monocytogenes serotype 4a (strain HCC23)</name>
    <dbReference type="NCBI Taxonomy" id="552536"/>
    <lineage>
        <taxon>Bacteria</taxon>
        <taxon>Bacillati</taxon>
        <taxon>Bacillota</taxon>
        <taxon>Bacilli</taxon>
        <taxon>Bacillales</taxon>
        <taxon>Listeriaceae</taxon>
        <taxon>Listeria</taxon>
    </lineage>
</organism>
<proteinExistence type="inferred from homology"/>
<feature type="chain" id="PRO_1000149757" description="UPF0266 membrane protein LMHCC_1856">
    <location>
        <begin position="1"/>
        <end position="155"/>
    </location>
</feature>
<feature type="transmembrane region" description="Helical" evidence="1">
    <location>
        <begin position="8"/>
        <end position="28"/>
    </location>
</feature>
<feature type="transmembrane region" description="Helical" evidence="1">
    <location>
        <begin position="46"/>
        <end position="66"/>
    </location>
</feature>
<feature type="transmembrane region" description="Helical" evidence="1">
    <location>
        <begin position="70"/>
        <end position="90"/>
    </location>
</feature>
<name>Y1856_LISMH</name>
<comment type="subcellular location">
    <subcellularLocation>
        <location evidence="1">Cell membrane</location>
        <topology evidence="1">Multi-pass membrane protein</topology>
    </subcellularLocation>
</comment>
<comment type="similarity">
    <text evidence="1">Belongs to the UPF0266 family.</text>
</comment>
<sequence length="155" mass="17889">MVWDATNIFLFAANILTVLYILYNDAVIPLWKGKTVLSVKLRSRGRWDGYIFVGIIVLLFVSNTFFREGPFSTSVLLGIMGVLFIYICFFRSSKAVFKESGLFYALLFFPYAKIERMNLSEDGVLVIETNRQRLMLFARSEKDLEKMLAVFTTYS</sequence>
<accession>B8DGI9</accession>